<evidence type="ECO:0000255" key="1">
    <source>
        <dbReference type="HAMAP-Rule" id="MF_00129"/>
    </source>
</evidence>
<comment type="function">
    <text evidence="1">NAD-binding protein involved in the addition of a carboxymethylaminomethyl (cmnm) group at the wobble position (U34) of certain tRNAs, forming tRNA-cmnm(5)s(2)U34.</text>
</comment>
<comment type="cofactor">
    <cofactor evidence="1">
        <name>FAD</name>
        <dbReference type="ChEBI" id="CHEBI:57692"/>
    </cofactor>
</comment>
<comment type="subunit">
    <text evidence="1">Homodimer. Heterotetramer of two MnmE and two MnmG subunits.</text>
</comment>
<comment type="subcellular location">
    <subcellularLocation>
        <location evidence="1">Cytoplasm</location>
    </subcellularLocation>
</comment>
<comment type="similarity">
    <text evidence="1">Belongs to the MnmG family.</text>
</comment>
<proteinExistence type="inferred from homology"/>
<organism>
    <name type="scientific">Acidovorax sp. (strain JS42)</name>
    <dbReference type="NCBI Taxonomy" id="232721"/>
    <lineage>
        <taxon>Bacteria</taxon>
        <taxon>Pseudomonadati</taxon>
        <taxon>Pseudomonadota</taxon>
        <taxon>Betaproteobacteria</taxon>
        <taxon>Burkholderiales</taxon>
        <taxon>Comamonadaceae</taxon>
        <taxon>Acidovorax</taxon>
    </lineage>
</organism>
<name>MNMG_ACISJ</name>
<feature type="chain" id="PRO_0000345234" description="tRNA uridine 5-carboxymethylaminomethyl modification enzyme MnmG">
    <location>
        <begin position="1"/>
        <end position="661"/>
    </location>
</feature>
<feature type="binding site" evidence="1">
    <location>
        <begin position="13"/>
        <end position="18"/>
    </location>
    <ligand>
        <name>FAD</name>
        <dbReference type="ChEBI" id="CHEBI:57692"/>
    </ligand>
</feature>
<feature type="binding site" evidence="1">
    <location>
        <begin position="285"/>
        <end position="299"/>
    </location>
    <ligand>
        <name>NAD(+)</name>
        <dbReference type="ChEBI" id="CHEBI:57540"/>
    </ligand>
</feature>
<accession>A1W207</accession>
<dbReference type="EMBL" id="CP000539">
    <property type="protein sequence ID" value="ABM40282.1"/>
    <property type="molecule type" value="Genomic_DNA"/>
</dbReference>
<dbReference type="SMR" id="A1W207"/>
<dbReference type="STRING" id="232721.Ajs_0026"/>
<dbReference type="KEGG" id="ajs:Ajs_0026"/>
<dbReference type="eggNOG" id="COG0445">
    <property type="taxonomic scope" value="Bacteria"/>
</dbReference>
<dbReference type="HOGENOM" id="CLU_007831_2_2_4"/>
<dbReference type="Proteomes" id="UP000000645">
    <property type="component" value="Chromosome"/>
</dbReference>
<dbReference type="GO" id="GO:0005829">
    <property type="term" value="C:cytosol"/>
    <property type="evidence" value="ECO:0007669"/>
    <property type="project" value="TreeGrafter"/>
</dbReference>
<dbReference type="GO" id="GO:0050660">
    <property type="term" value="F:flavin adenine dinucleotide binding"/>
    <property type="evidence" value="ECO:0007669"/>
    <property type="project" value="UniProtKB-UniRule"/>
</dbReference>
<dbReference type="GO" id="GO:0030488">
    <property type="term" value="P:tRNA methylation"/>
    <property type="evidence" value="ECO:0007669"/>
    <property type="project" value="TreeGrafter"/>
</dbReference>
<dbReference type="GO" id="GO:0002098">
    <property type="term" value="P:tRNA wobble uridine modification"/>
    <property type="evidence" value="ECO:0007669"/>
    <property type="project" value="InterPro"/>
</dbReference>
<dbReference type="FunFam" id="1.10.10.1800:FF:000001">
    <property type="entry name" value="tRNA uridine 5-carboxymethylaminomethyl modification enzyme MnmG"/>
    <property type="match status" value="1"/>
</dbReference>
<dbReference type="FunFam" id="1.10.150.570:FF:000001">
    <property type="entry name" value="tRNA uridine 5-carboxymethylaminomethyl modification enzyme MnmG"/>
    <property type="match status" value="1"/>
</dbReference>
<dbReference type="FunFam" id="3.50.50.60:FF:000002">
    <property type="entry name" value="tRNA uridine 5-carboxymethylaminomethyl modification enzyme MnmG"/>
    <property type="match status" value="1"/>
</dbReference>
<dbReference type="FunFam" id="3.50.50.60:FF:000010">
    <property type="entry name" value="tRNA uridine 5-carboxymethylaminomethyl modification enzyme MnmG"/>
    <property type="match status" value="1"/>
</dbReference>
<dbReference type="Gene3D" id="3.50.50.60">
    <property type="entry name" value="FAD/NAD(P)-binding domain"/>
    <property type="match status" value="2"/>
</dbReference>
<dbReference type="Gene3D" id="1.10.150.570">
    <property type="entry name" value="GidA associated domain, C-terminal subdomain"/>
    <property type="match status" value="1"/>
</dbReference>
<dbReference type="Gene3D" id="1.10.10.1800">
    <property type="entry name" value="tRNA uridine 5-carboxymethylaminomethyl modification enzyme MnmG/GidA"/>
    <property type="match status" value="1"/>
</dbReference>
<dbReference type="HAMAP" id="MF_00129">
    <property type="entry name" value="MnmG_GidA"/>
    <property type="match status" value="1"/>
</dbReference>
<dbReference type="InterPro" id="IPR036188">
    <property type="entry name" value="FAD/NAD-bd_sf"/>
</dbReference>
<dbReference type="InterPro" id="IPR049312">
    <property type="entry name" value="GIDA_C_N"/>
</dbReference>
<dbReference type="InterPro" id="IPR004416">
    <property type="entry name" value="MnmG"/>
</dbReference>
<dbReference type="InterPro" id="IPR002218">
    <property type="entry name" value="MnmG-rel"/>
</dbReference>
<dbReference type="InterPro" id="IPR020595">
    <property type="entry name" value="MnmG-rel_CS"/>
</dbReference>
<dbReference type="InterPro" id="IPR026904">
    <property type="entry name" value="MnmG_C"/>
</dbReference>
<dbReference type="InterPro" id="IPR047001">
    <property type="entry name" value="MnmG_C_subdom"/>
</dbReference>
<dbReference type="InterPro" id="IPR044920">
    <property type="entry name" value="MnmG_C_subdom_sf"/>
</dbReference>
<dbReference type="InterPro" id="IPR040131">
    <property type="entry name" value="MnmG_N"/>
</dbReference>
<dbReference type="NCBIfam" id="TIGR00136">
    <property type="entry name" value="mnmG_gidA"/>
    <property type="match status" value="1"/>
</dbReference>
<dbReference type="PANTHER" id="PTHR11806">
    <property type="entry name" value="GLUCOSE INHIBITED DIVISION PROTEIN A"/>
    <property type="match status" value="1"/>
</dbReference>
<dbReference type="PANTHER" id="PTHR11806:SF0">
    <property type="entry name" value="PROTEIN MTO1 HOMOLOG, MITOCHONDRIAL"/>
    <property type="match status" value="1"/>
</dbReference>
<dbReference type="Pfam" id="PF01134">
    <property type="entry name" value="GIDA"/>
    <property type="match status" value="1"/>
</dbReference>
<dbReference type="Pfam" id="PF21680">
    <property type="entry name" value="GIDA_C_1st"/>
    <property type="match status" value="1"/>
</dbReference>
<dbReference type="Pfam" id="PF13932">
    <property type="entry name" value="SAM_GIDA_C"/>
    <property type="match status" value="1"/>
</dbReference>
<dbReference type="SMART" id="SM01228">
    <property type="entry name" value="GIDA_assoc_3"/>
    <property type="match status" value="1"/>
</dbReference>
<dbReference type="SUPFAM" id="SSF51905">
    <property type="entry name" value="FAD/NAD(P)-binding domain"/>
    <property type="match status" value="1"/>
</dbReference>
<dbReference type="PROSITE" id="PS01280">
    <property type="entry name" value="GIDA_1"/>
    <property type="match status" value="1"/>
</dbReference>
<dbReference type="PROSITE" id="PS01281">
    <property type="entry name" value="GIDA_2"/>
    <property type="match status" value="1"/>
</dbReference>
<reference key="1">
    <citation type="submission" date="2006-12" db="EMBL/GenBank/DDBJ databases">
        <title>Complete sequence of chromosome 1 of Acidovorax sp. JS42.</title>
        <authorList>
            <person name="Copeland A."/>
            <person name="Lucas S."/>
            <person name="Lapidus A."/>
            <person name="Barry K."/>
            <person name="Detter J.C."/>
            <person name="Glavina del Rio T."/>
            <person name="Dalin E."/>
            <person name="Tice H."/>
            <person name="Pitluck S."/>
            <person name="Chertkov O."/>
            <person name="Brettin T."/>
            <person name="Bruce D."/>
            <person name="Han C."/>
            <person name="Tapia R."/>
            <person name="Gilna P."/>
            <person name="Schmutz J."/>
            <person name="Larimer F."/>
            <person name="Land M."/>
            <person name="Hauser L."/>
            <person name="Kyrpides N."/>
            <person name="Kim E."/>
            <person name="Stahl D."/>
            <person name="Richardson P."/>
        </authorList>
    </citation>
    <scope>NUCLEOTIDE SEQUENCE [LARGE SCALE GENOMIC DNA]</scope>
    <source>
        <strain>JS42</strain>
    </source>
</reference>
<protein>
    <recommendedName>
        <fullName evidence="1">tRNA uridine 5-carboxymethylaminomethyl modification enzyme MnmG</fullName>
    </recommendedName>
    <alternativeName>
        <fullName evidence="1">Glucose-inhibited division protein A</fullName>
    </alternativeName>
</protein>
<gene>
    <name evidence="1" type="primary">mnmG</name>
    <name evidence="1" type="synonym">gidA</name>
    <name type="ordered locus">Ajs_0026</name>
</gene>
<sequence length="661" mass="72628">MLYPQDFDVIVVGGGHAGTEAALAAARMGSRTLLLTHNIETLGQMSCNPSIGGIGKGHLVKEVDALGGAMALATDEAGIQFRILNSSKGPAVRATRAQADRILYKAAIRRMLENQPNLWLFQQAVDDLMVEGDRVVGAVTQVGIRFRSRAVVLTAGTFLDGKIHVGLNNYAAGRAGDPPAVSLSARLKELQLPQGRLKTGTPPRIDGRSIDFSQCEEQPGDGMPGGVNEGQVPVFSFMAHAYGGAAMHPRQVPCWITHTNARTHEIIRSGFDRSPMFTGKIEGVGPRYCPSVEDKINRFADKESHQIFLEPEGLTTHEFYPNGISTSLPFDIQYDLVRSMHGLENAHILRPGYAIEYDYFDPRSLKSSFETRQIQGLFFAGQINGTTGYEEAAAQGLFAGINAALQCRGVGAWVPARDEAYLGVLVDDLITKGVTEPYRMFTSRAEFRLQLREDNADMRLTEAGRRMGLVDDARWDAFSRKRDAVSRETERLKSTWVNPRNLPTVEAERVLGKAIEHEYNLFDLLRRPDVGYDALTTMDGGKYASEAVSRETLGELSASVIEQVEIAAKYAGYIDRQRDEVQRAAHFEKLRLPEDLDYMQVAALSIEVRQKLQKHRPETLGQASRISGVTPAAISLLMVHLKKGGFKGFAPQPADGVETVA</sequence>
<keyword id="KW-0963">Cytoplasm</keyword>
<keyword id="KW-0274">FAD</keyword>
<keyword id="KW-0285">Flavoprotein</keyword>
<keyword id="KW-0520">NAD</keyword>
<keyword id="KW-0819">tRNA processing</keyword>